<name>KHPA_LISIN</name>
<gene>
    <name evidence="1" type="primary">khpA</name>
    <name type="ordered locus">lin1910</name>
</gene>
<sequence>MEELILSIVKPLVDHPEDVVITPEETDTSLTYKLSVSKEDMGRVIGKQGRIAKAIRTLVYAVGSKNDKKIRLEIIE</sequence>
<proteinExistence type="inferred from homology"/>
<organism>
    <name type="scientific">Listeria innocua serovar 6a (strain ATCC BAA-680 / CLIP 11262)</name>
    <dbReference type="NCBI Taxonomy" id="272626"/>
    <lineage>
        <taxon>Bacteria</taxon>
        <taxon>Bacillati</taxon>
        <taxon>Bacillota</taxon>
        <taxon>Bacilli</taxon>
        <taxon>Bacillales</taxon>
        <taxon>Listeriaceae</taxon>
        <taxon>Listeria</taxon>
    </lineage>
</organism>
<dbReference type="EMBL" id="AL596170">
    <property type="protein sequence ID" value="CAC97140.1"/>
    <property type="molecule type" value="Genomic_DNA"/>
</dbReference>
<dbReference type="PIR" id="AD1671">
    <property type="entry name" value="AD1671"/>
</dbReference>
<dbReference type="RefSeq" id="WP_003728421.1">
    <property type="nucleotide sequence ID" value="NC_003212.1"/>
</dbReference>
<dbReference type="SMR" id="P67235"/>
<dbReference type="STRING" id="272626.gene:17566268"/>
<dbReference type="KEGG" id="lin:lin1910"/>
<dbReference type="eggNOG" id="COG1837">
    <property type="taxonomic scope" value="Bacteria"/>
</dbReference>
<dbReference type="HOGENOM" id="CLU_132074_1_2_9"/>
<dbReference type="OrthoDB" id="9812389at2"/>
<dbReference type="Proteomes" id="UP000002513">
    <property type="component" value="Chromosome"/>
</dbReference>
<dbReference type="GO" id="GO:0005737">
    <property type="term" value="C:cytoplasm"/>
    <property type="evidence" value="ECO:0007669"/>
    <property type="project" value="UniProtKB-SubCell"/>
</dbReference>
<dbReference type="GO" id="GO:0003723">
    <property type="term" value="F:RNA binding"/>
    <property type="evidence" value="ECO:0007669"/>
    <property type="project" value="UniProtKB-UniRule"/>
</dbReference>
<dbReference type="GO" id="GO:0071555">
    <property type="term" value="P:cell wall organization"/>
    <property type="evidence" value="ECO:0007669"/>
    <property type="project" value="UniProtKB-KW"/>
</dbReference>
<dbReference type="GO" id="GO:0009252">
    <property type="term" value="P:peptidoglycan biosynthetic process"/>
    <property type="evidence" value="ECO:0007669"/>
    <property type="project" value="UniProtKB-UniRule"/>
</dbReference>
<dbReference type="GO" id="GO:0008360">
    <property type="term" value="P:regulation of cell shape"/>
    <property type="evidence" value="ECO:0007669"/>
    <property type="project" value="UniProtKB-KW"/>
</dbReference>
<dbReference type="CDD" id="cd22533">
    <property type="entry name" value="KH-II_YlqC-like"/>
    <property type="match status" value="1"/>
</dbReference>
<dbReference type="Gene3D" id="3.30.300.20">
    <property type="match status" value="1"/>
</dbReference>
<dbReference type="HAMAP" id="MF_00088">
    <property type="entry name" value="KhpA"/>
    <property type="match status" value="1"/>
</dbReference>
<dbReference type="InterPro" id="IPR015946">
    <property type="entry name" value="KH_dom-like_a/b"/>
</dbReference>
<dbReference type="InterPro" id="IPR009019">
    <property type="entry name" value="KH_sf_prok-type"/>
</dbReference>
<dbReference type="InterPro" id="IPR020627">
    <property type="entry name" value="KhpA"/>
</dbReference>
<dbReference type="PANTHER" id="PTHR34654:SF1">
    <property type="entry name" value="RNA-BINDING PROTEIN KHPA"/>
    <property type="match status" value="1"/>
</dbReference>
<dbReference type="PANTHER" id="PTHR34654">
    <property type="entry name" value="UPF0109 PROTEIN SCO5592"/>
    <property type="match status" value="1"/>
</dbReference>
<dbReference type="Pfam" id="PF13083">
    <property type="entry name" value="KH_KhpA-B"/>
    <property type="match status" value="1"/>
</dbReference>
<dbReference type="SUPFAM" id="SSF54814">
    <property type="entry name" value="Prokaryotic type KH domain (KH-domain type II)"/>
    <property type="match status" value="1"/>
</dbReference>
<dbReference type="PROSITE" id="PS50084">
    <property type="entry name" value="KH_TYPE_1"/>
    <property type="match status" value="1"/>
</dbReference>
<evidence type="ECO:0000255" key="1">
    <source>
        <dbReference type="HAMAP-Rule" id="MF_00088"/>
    </source>
</evidence>
<comment type="function">
    <text evidence="1">A probable RNA chaperone. Forms a complex with KhpB which binds to cellular RNA and controls its expression. Plays a role in peptidoglycan (PG) homeostasis and cell length regulation.</text>
</comment>
<comment type="subunit">
    <text evidence="1">Forms a complex with KhpB.</text>
</comment>
<comment type="subcellular location">
    <subcellularLocation>
        <location evidence="1">Cytoplasm</location>
    </subcellularLocation>
</comment>
<comment type="similarity">
    <text evidence="1">Belongs to the KhpA RNA-binding protein family.</text>
</comment>
<feature type="chain" id="PRO_0000163227" description="RNA-binding protein KhpA">
    <location>
        <begin position="1"/>
        <end position="76"/>
    </location>
</feature>
<feature type="domain" description="KH" evidence="1">
    <location>
        <begin position="29"/>
        <end position="76"/>
    </location>
</feature>
<reference key="1">
    <citation type="journal article" date="2001" name="Science">
        <title>Comparative genomics of Listeria species.</title>
        <authorList>
            <person name="Glaser P."/>
            <person name="Frangeul L."/>
            <person name="Buchrieser C."/>
            <person name="Rusniok C."/>
            <person name="Amend A."/>
            <person name="Baquero F."/>
            <person name="Berche P."/>
            <person name="Bloecker H."/>
            <person name="Brandt P."/>
            <person name="Chakraborty T."/>
            <person name="Charbit A."/>
            <person name="Chetouani F."/>
            <person name="Couve E."/>
            <person name="de Daruvar A."/>
            <person name="Dehoux P."/>
            <person name="Domann E."/>
            <person name="Dominguez-Bernal G."/>
            <person name="Duchaud E."/>
            <person name="Durant L."/>
            <person name="Dussurget O."/>
            <person name="Entian K.-D."/>
            <person name="Fsihi H."/>
            <person name="Garcia-del Portillo F."/>
            <person name="Garrido P."/>
            <person name="Gautier L."/>
            <person name="Goebel W."/>
            <person name="Gomez-Lopez N."/>
            <person name="Hain T."/>
            <person name="Hauf J."/>
            <person name="Jackson D."/>
            <person name="Jones L.-M."/>
            <person name="Kaerst U."/>
            <person name="Kreft J."/>
            <person name="Kuhn M."/>
            <person name="Kunst F."/>
            <person name="Kurapkat G."/>
            <person name="Madueno E."/>
            <person name="Maitournam A."/>
            <person name="Mata Vicente J."/>
            <person name="Ng E."/>
            <person name="Nedjari H."/>
            <person name="Nordsiek G."/>
            <person name="Novella S."/>
            <person name="de Pablos B."/>
            <person name="Perez-Diaz J.-C."/>
            <person name="Purcell R."/>
            <person name="Remmel B."/>
            <person name="Rose M."/>
            <person name="Schlueter T."/>
            <person name="Simoes N."/>
            <person name="Tierrez A."/>
            <person name="Vazquez-Boland J.-A."/>
            <person name="Voss H."/>
            <person name="Wehland J."/>
            <person name="Cossart P."/>
        </authorList>
    </citation>
    <scope>NUCLEOTIDE SEQUENCE [LARGE SCALE GENOMIC DNA]</scope>
    <source>
        <strain>ATCC BAA-680 / CLIP 11262</strain>
    </source>
</reference>
<protein>
    <recommendedName>
        <fullName evidence="1">RNA-binding protein KhpA</fullName>
    </recommendedName>
    <alternativeName>
        <fullName evidence="1">KH-domain protein A</fullName>
    </alternativeName>
</protein>
<accession>P67235</accession>
<accession>Q92AL2</accession>
<keyword id="KW-0133">Cell shape</keyword>
<keyword id="KW-0961">Cell wall biogenesis/degradation</keyword>
<keyword id="KW-0143">Chaperone</keyword>
<keyword id="KW-0963">Cytoplasm</keyword>
<keyword id="KW-0694">RNA-binding</keyword>